<reference key="1">
    <citation type="submission" date="2007-10" db="EMBL/GenBank/DDBJ databases">
        <title>Complete genome of Alkaliphilus oremlandii OhILAs.</title>
        <authorList>
            <person name="Copeland A."/>
            <person name="Lucas S."/>
            <person name="Lapidus A."/>
            <person name="Barry K."/>
            <person name="Detter J.C."/>
            <person name="Glavina del Rio T."/>
            <person name="Hammon N."/>
            <person name="Israni S."/>
            <person name="Dalin E."/>
            <person name="Tice H."/>
            <person name="Pitluck S."/>
            <person name="Chain P."/>
            <person name="Malfatti S."/>
            <person name="Shin M."/>
            <person name="Vergez L."/>
            <person name="Schmutz J."/>
            <person name="Larimer F."/>
            <person name="Land M."/>
            <person name="Hauser L."/>
            <person name="Kyrpides N."/>
            <person name="Mikhailova N."/>
            <person name="Stolz J.F."/>
            <person name="Dawson A."/>
            <person name="Fisher E."/>
            <person name="Crable B."/>
            <person name="Perera E."/>
            <person name="Lisak J."/>
            <person name="Ranganathan M."/>
            <person name="Basu P."/>
            <person name="Richardson P."/>
        </authorList>
    </citation>
    <scope>NUCLEOTIDE SEQUENCE [LARGE SCALE GENOMIC DNA]</scope>
    <source>
        <strain>OhILAs</strain>
    </source>
</reference>
<feature type="chain" id="PRO_1000058384" description="Probable cytosol aminopeptidase">
    <location>
        <begin position="1"/>
        <end position="499"/>
    </location>
</feature>
<feature type="active site" evidence="1">
    <location>
        <position position="279"/>
    </location>
</feature>
<feature type="active site" evidence="1">
    <location>
        <position position="353"/>
    </location>
</feature>
<feature type="binding site" evidence="1">
    <location>
        <position position="267"/>
    </location>
    <ligand>
        <name>Mn(2+)</name>
        <dbReference type="ChEBI" id="CHEBI:29035"/>
        <label>2</label>
    </ligand>
</feature>
<feature type="binding site" evidence="1">
    <location>
        <position position="272"/>
    </location>
    <ligand>
        <name>Mn(2+)</name>
        <dbReference type="ChEBI" id="CHEBI:29035"/>
        <label>1</label>
    </ligand>
</feature>
<feature type="binding site" evidence="1">
    <location>
        <position position="272"/>
    </location>
    <ligand>
        <name>Mn(2+)</name>
        <dbReference type="ChEBI" id="CHEBI:29035"/>
        <label>2</label>
    </ligand>
</feature>
<feature type="binding site" evidence="1">
    <location>
        <position position="290"/>
    </location>
    <ligand>
        <name>Mn(2+)</name>
        <dbReference type="ChEBI" id="CHEBI:29035"/>
        <label>2</label>
    </ligand>
</feature>
<feature type="binding site" evidence="1">
    <location>
        <position position="349"/>
    </location>
    <ligand>
        <name>Mn(2+)</name>
        <dbReference type="ChEBI" id="CHEBI:29035"/>
        <label>1</label>
    </ligand>
</feature>
<feature type="binding site" evidence="1">
    <location>
        <position position="351"/>
    </location>
    <ligand>
        <name>Mn(2+)</name>
        <dbReference type="ChEBI" id="CHEBI:29035"/>
        <label>1</label>
    </ligand>
</feature>
<feature type="binding site" evidence="1">
    <location>
        <position position="351"/>
    </location>
    <ligand>
        <name>Mn(2+)</name>
        <dbReference type="ChEBI" id="CHEBI:29035"/>
        <label>2</label>
    </ligand>
</feature>
<name>AMPA_ALKOO</name>
<gene>
    <name evidence="1" type="primary">pepA</name>
    <name type="ordered locus">Clos_0278</name>
</gene>
<comment type="function">
    <text evidence="1">Presumably involved in the processing and regular turnover of intracellular proteins. Catalyzes the removal of unsubstituted N-terminal amino acids from various peptides.</text>
</comment>
<comment type="catalytic activity">
    <reaction evidence="1">
        <text>Release of an N-terminal amino acid, Xaa-|-Yaa-, in which Xaa is preferably Leu, but may be other amino acids including Pro although not Arg or Lys, and Yaa may be Pro. Amino acid amides and methyl esters are also readily hydrolyzed, but rates on arylamides are exceedingly low.</text>
        <dbReference type="EC" id="3.4.11.1"/>
    </reaction>
</comment>
<comment type="catalytic activity">
    <reaction evidence="1">
        <text>Release of an N-terminal amino acid, preferentially leucine, but not glutamic or aspartic acids.</text>
        <dbReference type="EC" id="3.4.11.10"/>
    </reaction>
</comment>
<comment type="cofactor">
    <cofactor evidence="1">
        <name>Mn(2+)</name>
        <dbReference type="ChEBI" id="CHEBI:29035"/>
    </cofactor>
    <text evidence="1">Binds 2 manganese ions per subunit.</text>
</comment>
<comment type="subcellular location">
    <subcellularLocation>
        <location evidence="1">Cytoplasm</location>
    </subcellularLocation>
</comment>
<comment type="similarity">
    <text evidence="1">Belongs to the peptidase M17 family.</text>
</comment>
<proteinExistence type="inferred from homology"/>
<organism>
    <name type="scientific">Alkaliphilus oremlandii (strain OhILAs)</name>
    <name type="common">Clostridium oremlandii (strain OhILAs)</name>
    <dbReference type="NCBI Taxonomy" id="350688"/>
    <lineage>
        <taxon>Bacteria</taxon>
        <taxon>Bacillati</taxon>
        <taxon>Bacillota</taxon>
        <taxon>Clostridia</taxon>
        <taxon>Peptostreptococcales</taxon>
        <taxon>Natronincolaceae</taxon>
        <taxon>Alkaliphilus</taxon>
    </lineage>
</organism>
<dbReference type="EC" id="3.4.11.1" evidence="1"/>
<dbReference type="EC" id="3.4.11.10" evidence="1"/>
<dbReference type="EMBL" id="CP000853">
    <property type="protein sequence ID" value="ABW17841.1"/>
    <property type="molecule type" value="Genomic_DNA"/>
</dbReference>
<dbReference type="RefSeq" id="WP_012158156.1">
    <property type="nucleotide sequence ID" value="NC_009922.1"/>
</dbReference>
<dbReference type="SMR" id="A8ML24"/>
<dbReference type="STRING" id="350688.Clos_0278"/>
<dbReference type="KEGG" id="aoe:Clos_0278"/>
<dbReference type="eggNOG" id="COG0260">
    <property type="taxonomic scope" value="Bacteria"/>
</dbReference>
<dbReference type="HOGENOM" id="CLU_013734_2_2_9"/>
<dbReference type="OrthoDB" id="9809354at2"/>
<dbReference type="Proteomes" id="UP000000269">
    <property type="component" value="Chromosome"/>
</dbReference>
<dbReference type="GO" id="GO:0005737">
    <property type="term" value="C:cytoplasm"/>
    <property type="evidence" value="ECO:0007669"/>
    <property type="project" value="UniProtKB-SubCell"/>
</dbReference>
<dbReference type="GO" id="GO:0030145">
    <property type="term" value="F:manganese ion binding"/>
    <property type="evidence" value="ECO:0007669"/>
    <property type="project" value="UniProtKB-UniRule"/>
</dbReference>
<dbReference type="GO" id="GO:0070006">
    <property type="term" value="F:metalloaminopeptidase activity"/>
    <property type="evidence" value="ECO:0007669"/>
    <property type="project" value="InterPro"/>
</dbReference>
<dbReference type="GO" id="GO:0006508">
    <property type="term" value="P:proteolysis"/>
    <property type="evidence" value="ECO:0007669"/>
    <property type="project" value="UniProtKB-KW"/>
</dbReference>
<dbReference type="CDD" id="cd00433">
    <property type="entry name" value="Peptidase_M17"/>
    <property type="match status" value="1"/>
</dbReference>
<dbReference type="Gene3D" id="3.40.220.10">
    <property type="entry name" value="Leucine Aminopeptidase, subunit E, domain 1"/>
    <property type="match status" value="1"/>
</dbReference>
<dbReference type="Gene3D" id="3.40.630.10">
    <property type="entry name" value="Zn peptidases"/>
    <property type="match status" value="1"/>
</dbReference>
<dbReference type="HAMAP" id="MF_00181">
    <property type="entry name" value="Cytosol_peptidase_M17"/>
    <property type="match status" value="1"/>
</dbReference>
<dbReference type="InterPro" id="IPR011356">
    <property type="entry name" value="Leucine_aapep/pepB"/>
</dbReference>
<dbReference type="InterPro" id="IPR043472">
    <property type="entry name" value="Macro_dom-like"/>
</dbReference>
<dbReference type="InterPro" id="IPR000819">
    <property type="entry name" value="Peptidase_M17_C"/>
</dbReference>
<dbReference type="InterPro" id="IPR023042">
    <property type="entry name" value="Peptidase_M17_leu_NH2_pept"/>
</dbReference>
<dbReference type="InterPro" id="IPR008283">
    <property type="entry name" value="Peptidase_M17_N"/>
</dbReference>
<dbReference type="NCBIfam" id="NF002073">
    <property type="entry name" value="PRK00913.1-2"/>
    <property type="match status" value="1"/>
</dbReference>
<dbReference type="NCBIfam" id="NF002074">
    <property type="entry name" value="PRK00913.1-4"/>
    <property type="match status" value="1"/>
</dbReference>
<dbReference type="NCBIfam" id="NF002076">
    <property type="entry name" value="PRK00913.2-3"/>
    <property type="match status" value="1"/>
</dbReference>
<dbReference type="NCBIfam" id="NF002077">
    <property type="entry name" value="PRK00913.2-4"/>
    <property type="match status" value="1"/>
</dbReference>
<dbReference type="NCBIfam" id="NF002083">
    <property type="entry name" value="PRK00913.3-5"/>
    <property type="match status" value="1"/>
</dbReference>
<dbReference type="PANTHER" id="PTHR11963:SF23">
    <property type="entry name" value="CYTOSOL AMINOPEPTIDASE"/>
    <property type="match status" value="1"/>
</dbReference>
<dbReference type="PANTHER" id="PTHR11963">
    <property type="entry name" value="LEUCINE AMINOPEPTIDASE-RELATED"/>
    <property type="match status" value="1"/>
</dbReference>
<dbReference type="Pfam" id="PF00883">
    <property type="entry name" value="Peptidase_M17"/>
    <property type="match status" value="1"/>
</dbReference>
<dbReference type="Pfam" id="PF02789">
    <property type="entry name" value="Peptidase_M17_N"/>
    <property type="match status" value="1"/>
</dbReference>
<dbReference type="PRINTS" id="PR00481">
    <property type="entry name" value="LAMNOPPTDASE"/>
</dbReference>
<dbReference type="SUPFAM" id="SSF52949">
    <property type="entry name" value="Macro domain-like"/>
    <property type="match status" value="1"/>
</dbReference>
<dbReference type="SUPFAM" id="SSF53187">
    <property type="entry name" value="Zn-dependent exopeptidases"/>
    <property type="match status" value="1"/>
</dbReference>
<dbReference type="PROSITE" id="PS00631">
    <property type="entry name" value="CYTOSOL_AP"/>
    <property type="match status" value="1"/>
</dbReference>
<accession>A8ML24</accession>
<protein>
    <recommendedName>
        <fullName evidence="1">Probable cytosol aminopeptidase</fullName>
        <ecNumber evidence="1">3.4.11.1</ecNumber>
    </recommendedName>
    <alternativeName>
        <fullName evidence="1">Leucine aminopeptidase</fullName>
        <shortName evidence="1">LAP</shortName>
        <ecNumber evidence="1">3.4.11.10</ecNumber>
    </alternativeName>
    <alternativeName>
        <fullName evidence="1">Leucyl aminopeptidase</fullName>
    </alternativeName>
</protein>
<sequence>MKIQVMKDQIKEIMADAIVIGIYEGTKSLNDNLKSMDLQLDGIITEMISSEAFKGKEGETLVIYSLGRIPAKKIMLLGLGKETDLKEDTIRRLTAKVVREAEAMKAKVVAMTAIGLDRGIAPELVGQCMMEGADLAAYKFDKYKTTDRNSGEGVQELYLLNEEESINKDLEKGFQTGAKLAQGTIIARNLVNEPSNVLTPTAMADKAIEIANNHGLEISILEKEDMEKLGMGSFLGVTKGSEEPPKLIAIKYFGNKEDEEIIGLVGKGLTFDSGGISLKPGAGMDAMKSDMGGAAAVLGAMDVIGALKPKVNVIAIVGACENMPSGKAYKPGDILTSMNGKTIEILNTDAEGRLVLIDCITYALKQGATRIVDLATLTGACIVALGHVTTALVSNDDDFVQQMYLAAERAGEKVWQLPSFPEYKELIKSDIADLKNVGDKGAGTITAGLFLGEFVEGRPWIHMDIAGTAMALGTKGYYAKGGSGVGVRTLYHLVKSMEK</sequence>
<keyword id="KW-0031">Aminopeptidase</keyword>
<keyword id="KW-0963">Cytoplasm</keyword>
<keyword id="KW-0378">Hydrolase</keyword>
<keyword id="KW-0464">Manganese</keyword>
<keyword id="KW-0479">Metal-binding</keyword>
<keyword id="KW-0645">Protease</keyword>
<keyword id="KW-1185">Reference proteome</keyword>
<evidence type="ECO:0000255" key="1">
    <source>
        <dbReference type="HAMAP-Rule" id="MF_00181"/>
    </source>
</evidence>